<gene>
    <name type="primary">MED6</name>
    <name type="ordered locus">YALI0E32373g</name>
</gene>
<protein>
    <recommendedName>
        <fullName>Mediator of RNA polymerase II transcription subunit 6</fullName>
    </recommendedName>
    <alternativeName>
        <fullName>Mediator complex subunit 6</fullName>
    </alternativeName>
</protein>
<proteinExistence type="inferred from homology"/>
<evidence type="ECO:0000250" key="1"/>
<evidence type="ECO:0000256" key="2">
    <source>
        <dbReference type="SAM" id="MobiDB-lite"/>
    </source>
</evidence>
<evidence type="ECO:0000305" key="3"/>
<comment type="function">
    <text evidence="1">Component of the Mediator complex, a coactivator involved in the regulated transcription of nearly all RNA polymerase II-dependent genes. Mediator functions as a bridge to convey information from gene-specific regulatory proteins to the basal RNA polymerase II transcription machinery. Mediator is recruited to promoters by direct interactions with regulatory proteins and serves as a scaffold for the assembly of a functional preinitiation complex with RNA polymerase II and the general transcription factors (By similarity).</text>
</comment>
<comment type="subunit">
    <text evidence="1">Component of the Mediator complex.</text>
</comment>
<comment type="subcellular location">
    <subcellularLocation>
        <location evidence="1">Nucleus</location>
    </subcellularLocation>
</comment>
<comment type="similarity">
    <text evidence="3">Belongs to the Mediator complex subunit 6 family.</text>
</comment>
<organism>
    <name type="scientific">Yarrowia lipolytica (strain CLIB 122 / E 150)</name>
    <name type="common">Yeast</name>
    <name type="synonym">Candida lipolytica</name>
    <dbReference type="NCBI Taxonomy" id="284591"/>
    <lineage>
        <taxon>Eukaryota</taxon>
        <taxon>Fungi</taxon>
        <taxon>Dikarya</taxon>
        <taxon>Ascomycota</taxon>
        <taxon>Saccharomycotina</taxon>
        <taxon>Dipodascomycetes</taxon>
        <taxon>Dipodascales</taxon>
        <taxon>Dipodascales incertae sedis</taxon>
        <taxon>Yarrowia</taxon>
    </lineage>
</organism>
<reference key="1">
    <citation type="journal article" date="2004" name="Nature">
        <title>Genome evolution in yeasts.</title>
        <authorList>
            <person name="Dujon B."/>
            <person name="Sherman D."/>
            <person name="Fischer G."/>
            <person name="Durrens P."/>
            <person name="Casaregola S."/>
            <person name="Lafontaine I."/>
            <person name="de Montigny J."/>
            <person name="Marck C."/>
            <person name="Neuveglise C."/>
            <person name="Talla E."/>
            <person name="Goffard N."/>
            <person name="Frangeul L."/>
            <person name="Aigle M."/>
            <person name="Anthouard V."/>
            <person name="Babour A."/>
            <person name="Barbe V."/>
            <person name="Barnay S."/>
            <person name="Blanchin S."/>
            <person name="Beckerich J.-M."/>
            <person name="Beyne E."/>
            <person name="Bleykasten C."/>
            <person name="Boisrame A."/>
            <person name="Boyer J."/>
            <person name="Cattolico L."/>
            <person name="Confanioleri F."/>
            <person name="de Daruvar A."/>
            <person name="Despons L."/>
            <person name="Fabre E."/>
            <person name="Fairhead C."/>
            <person name="Ferry-Dumazet H."/>
            <person name="Groppi A."/>
            <person name="Hantraye F."/>
            <person name="Hennequin C."/>
            <person name="Jauniaux N."/>
            <person name="Joyet P."/>
            <person name="Kachouri R."/>
            <person name="Kerrest A."/>
            <person name="Koszul R."/>
            <person name="Lemaire M."/>
            <person name="Lesur I."/>
            <person name="Ma L."/>
            <person name="Muller H."/>
            <person name="Nicaud J.-M."/>
            <person name="Nikolski M."/>
            <person name="Oztas S."/>
            <person name="Ozier-Kalogeropoulos O."/>
            <person name="Pellenz S."/>
            <person name="Potier S."/>
            <person name="Richard G.-F."/>
            <person name="Straub M.-L."/>
            <person name="Suleau A."/>
            <person name="Swennen D."/>
            <person name="Tekaia F."/>
            <person name="Wesolowski-Louvel M."/>
            <person name="Westhof E."/>
            <person name="Wirth B."/>
            <person name="Zeniou-Meyer M."/>
            <person name="Zivanovic Y."/>
            <person name="Bolotin-Fukuhara M."/>
            <person name="Thierry A."/>
            <person name="Bouchier C."/>
            <person name="Caudron B."/>
            <person name="Scarpelli C."/>
            <person name="Gaillardin C."/>
            <person name="Weissenbach J."/>
            <person name="Wincker P."/>
            <person name="Souciet J.-L."/>
        </authorList>
    </citation>
    <scope>NUCLEOTIDE SEQUENCE [LARGE SCALE GENOMIC DNA]</scope>
    <source>
        <strain>CLIB 122 / E 150</strain>
    </source>
</reference>
<accession>Q6C3T0</accession>
<keyword id="KW-0010">Activator</keyword>
<keyword id="KW-0539">Nucleus</keyword>
<keyword id="KW-1185">Reference proteome</keyword>
<keyword id="KW-0804">Transcription</keyword>
<keyword id="KW-0805">Transcription regulation</keyword>
<feature type="chain" id="PRO_0000303064" description="Mediator of RNA polymerase II transcription subunit 6">
    <location>
        <begin position="1"/>
        <end position="227"/>
    </location>
</feature>
<feature type="region of interest" description="Disordered" evidence="2">
    <location>
        <begin position="149"/>
        <end position="172"/>
    </location>
</feature>
<feature type="region of interest" description="Disordered" evidence="2">
    <location>
        <begin position="204"/>
        <end position="227"/>
    </location>
</feature>
<feature type="compositionally biased region" description="Polar residues" evidence="2">
    <location>
        <begin position="149"/>
        <end position="162"/>
    </location>
</feature>
<name>MED6_YARLI</name>
<sequence>MENLDEVQWRSPEWIQAHQGLRTDNVLDYFAESPFYDRVSNNQVLRMQTQFNQQQTGQLTPQHFEQELQKMTGIEFVITHVREPDLWVIKKQNRLNPQQTTPISTYFVINENVYMAPTVAAIMQSRVLSTSMFLKRALEEAIELPSYSPSQGYTYEDSQLTTAGDDDSTPQASKAELGLLERSFRAAISGQQKYVSDIAPISSQSESAASSVPGTPVLKGRKLPLKK</sequence>
<dbReference type="EMBL" id="CR382131">
    <property type="protein sequence ID" value="CAG80286.1"/>
    <property type="molecule type" value="Genomic_DNA"/>
</dbReference>
<dbReference type="RefSeq" id="XP_504682.1">
    <property type="nucleotide sequence ID" value="XM_504682.1"/>
</dbReference>
<dbReference type="SMR" id="Q6C3T0"/>
<dbReference type="FunCoup" id="Q6C3T0">
    <property type="interactions" value="837"/>
</dbReference>
<dbReference type="STRING" id="284591.Q6C3T0"/>
<dbReference type="EnsemblFungi" id="CAG80286">
    <property type="protein sequence ID" value="CAG80286"/>
    <property type="gene ID" value="YALI0_E32373g"/>
</dbReference>
<dbReference type="KEGG" id="yli:2912825"/>
<dbReference type="VEuPathDB" id="FungiDB:YALI0_E32373g"/>
<dbReference type="HOGENOM" id="CLU_1220520_0_0_1"/>
<dbReference type="InParanoid" id="Q6C3T0"/>
<dbReference type="OMA" id="ERPPFLW"/>
<dbReference type="OrthoDB" id="114340at4891"/>
<dbReference type="Proteomes" id="UP000001300">
    <property type="component" value="Chromosome E"/>
</dbReference>
<dbReference type="GO" id="GO:0070847">
    <property type="term" value="C:core mediator complex"/>
    <property type="evidence" value="ECO:0000318"/>
    <property type="project" value="GO_Central"/>
</dbReference>
<dbReference type="GO" id="GO:0016592">
    <property type="term" value="C:mediator complex"/>
    <property type="evidence" value="ECO:0000318"/>
    <property type="project" value="GO_Central"/>
</dbReference>
<dbReference type="GO" id="GO:0003713">
    <property type="term" value="F:transcription coactivator activity"/>
    <property type="evidence" value="ECO:0000318"/>
    <property type="project" value="GO_Central"/>
</dbReference>
<dbReference type="GO" id="GO:0006357">
    <property type="term" value="P:regulation of transcription by RNA polymerase II"/>
    <property type="evidence" value="ECO:0000318"/>
    <property type="project" value="GO_Central"/>
</dbReference>
<dbReference type="FunFam" id="3.10.450.580:FF:000004">
    <property type="entry name" value="Mediator of RNA polymerase II transcription subunit 6"/>
    <property type="match status" value="1"/>
</dbReference>
<dbReference type="Gene3D" id="3.10.450.580">
    <property type="entry name" value="Mediator complex, subunit Med6"/>
    <property type="match status" value="1"/>
</dbReference>
<dbReference type="InterPro" id="IPR007018">
    <property type="entry name" value="Mediator_Med6"/>
</dbReference>
<dbReference type="InterPro" id="IPR038566">
    <property type="entry name" value="Mediator_Med6_sf"/>
</dbReference>
<dbReference type="PANTHER" id="PTHR13104">
    <property type="entry name" value="MED-6-RELATED"/>
    <property type="match status" value="1"/>
</dbReference>
<dbReference type="Pfam" id="PF04934">
    <property type="entry name" value="Med6"/>
    <property type="match status" value="1"/>
</dbReference>